<protein>
    <recommendedName>
        <fullName evidence="1">D-alanyl carrier protein</fullName>
        <shortName evidence="1">DCP</shortName>
    </recommendedName>
    <alternativeName>
        <fullName evidence="1">D-alanine--poly(phosphoribitol) ligase subunit 2</fullName>
    </alternativeName>
</protein>
<reference key="1">
    <citation type="journal article" date="2006" name="Proc. Natl. Acad. Sci. U.S.A.">
        <title>Comparative genomics of the lactic acid bacteria.</title>
        <authorList>
            <person name="Makarova K.S."/>
            <person name="Slesarev A."/>
            <person name="Wolf Y.I."/>
            <person name="Sorokin A."/>
            <person name="Mirkin B."/>
            <person name="Koonin E.V."/>
            <person name="Pavlov A."/>
            <person name="Pavlova N."/>
            <person name="Karamychev V."/>
            <person name="Polouchine N."/>
            <person name="Shakhova V."/>
            <person name="Grigoriev I."/>
            <person name="Lou Y."/>
            <person name="Rohksar D."/>
            <person name="Lucas S."/>
            <person name="Huang K."/>
            <person name="Goodstein D.M."/>
            <person name="Hawkins T."/>
            <person name="Plengvidhya V."/>
            <person name="Welker D."/>
            <person name="Hughes J."/>
            <person name="Goh Y."/>
            <person name="Benson A."/>
            <person name="Baldwin K."/>
            <person name="Lee J.-H."/>
            <person name="Diaz-Muniz I."/>
            <person name="Dosti B."/>
            <person name="Smeianov V."/>
            <person name="Wechter W."/>
            <person name="Barabote R."/>
            <person name="Lorca G."/>
            <person name="Altermann E."/>
            <person name="Barrangou R."/>
            <person name="Ganesan B."/>
            <person name="Xie Y."/>
            <person name="Rawsthorne H."/>
            <person name="Tamir D."/>
            <person name="Parker C."/>
            <person name="Breidt F."/>
            <person name="Broadbent J.R."/>
            <person name="Hutkins R."/>
            <person name="O'Sullivan D."/>
            <person name="Steele J."/>
            <person name="Unlu G."/>
            <person name="Saier M.H. Jr."/>
            <person name="Klaenhammer T."/>
            <person name="Richardson P."/>
            <person name="Kozyavkin S."/>
            <person name="Weimer B.C."/>
            <person name="Mills D.A."/>
        </authorList>
    </citation>
    <scope>NUCLEOTIDE SEQUENCE [LARGE SCALE GENOMIC DNA]</scope>
    <source>
        <strain>ATCC 33323 / DSM 20243 / BCRC 14619 / CIP 102991 / JCM 1131 / KCTC 3163 / NCIMB 11718 / NCTC 13722 / AM63</strain>
    </source>
</reference>
<gene>
    <name evidence="1" type="primary">dltC</name>
    <name type="ordered locus">LGAS_1816</name>
</gene>
<comment type="function">
    <text evidence="1">Carrier protein involved in the D-alanylation of lipoteichoic acid (LTA). The loading of thioester-linked D-alanine onto DltC is catalyzed by D-alanine--D-alanyl carrier protein ligase DltA. The DltC-carried D-alanyl group is further transferred to cell membrane phosphatidylglycerol (PG) by forming an ester bond, probably catalyzed by DltD. D-alanylation of LTA plays an important role in modulating the properties of the cell wall in Gram-positive bacteria, influencing the net charge of the cell wall.</text>
</comment>
<comment type="pathway">
    <text evidence="1">Cell wall biogenesis; lipoteichoic acid biosynthesis.</text>
</comment>
<comment type="subcellular location">
    <subcellularLocation>
        <location evidence="1">Cytoplasm</location>
    </subcellularLocation>
</comment>
<comment type="PTM">
    <text evidence="1">4'-phosphopantetheine is transferred from CoA to a specific serine of apo-DCP.</text>
</comment>
<comment type="similarity">
    <text evidence="1">Belongs to the DltC family.</text>
</comment>
<proteinExistence type="inferred from homology"/>
<name>DLTC_LACGA</name>
<sequence length="79" mass="8953">MDTKQAVLDILNELTGEDLSDQMDENIFENGLLDSMATVQMLLELQDKCGVTAPVSEFHREDWDTPNKIIAKVESLRNE</sequence>
<evidence type="ECO:0000255" key="1">
    <source>
        <dbReference type="HAMAP-Rule" id="MF_00565"/>
    </source>
</evidence>
<feature type="chain" id="PRO_1000024917" description="D-alanyl carrier protein">
    <location>
        <begin position="1"/>
        <end position="79"/>
    </location>
</feature>
<feature type="domain" description="Carrier" evidence="1">
    <location>
        <begin position="1"/>
        <end position="77"/>
    </location>
</feature>
<feature type="modified residue" description="O-(pantetheine 4'-phosphoryl)serine" evidence="1">
    <location>
        <position position="35"/>
    </location>
</feature>
<dbReference type="EMBL" id="CP000413">
    <property type="protein sequence ID" value="ABJ61091.1"/>
    <property type="molecule type" value="Genomic_DNA"/>
</dbReference>
<dbReference type="RefSeq" id="WP_003648200.1">
    <property type="nucleotide sequence ID" value="NZ_WBMG01000006.1"/>
</dbReference>
<dbReference type="SMR" id="Q040N1"/>
<dbReference type="GeneID" id="64334562"/>
<dbReference type="KEGG" id="lga:LGAS_1816"/>
<dbReference type="HOGENOM" id="CLU_108696_19_0_9"/>
<dbReference type="BioCyc" id="LGAS324831:G1G6Y-1807-MONOMER"/>
<dbReference type="UniPathway" id="UPA00556"/>
<dbReference type="Proteomes" id="UP000000664">
    <property type="component" value="Chromosome"/>
</dbReference>
<dbReference type="GO" id="GO:0005737">
    <property type="term" value="C:cytoplasm"/>
    <property type="evidence" value="ECO:0007669"/>
    <property type="project" value="UniProtKB-SubCell"/>
</dbReference>
<dbReference type="GO" id="GO:0036370">
    <property type="term" value="F:D-alanyl carrier activity"/>
    <property type="evidence" value="ECO:0007669"/>
    <property type="project" value="UniProtKB-UniRule"/>
</dbReference>
<dbReference type="GO" id="GO:0071555">
    <property type="term" value="P:cell wall organization"/>
    <property type="evidence" value="ECO:0007669"/>
    <property type="project" value="UniProtKB-KW"/>
</dbReference>
<dbReference type="GO" id="GO:0070395">
    <property type="term" value="P:lipoteichoic acid biosynthetic process"/>
    <property type="evidence" value="ECO:0007669"/>
    <property type="project" value="UniProtKB-UniRule"/>
</dbReference>
<dbReference type="Gene3D" id="1.10.1200.10">
    <property type="entry name" value="ACP-like"/>
    <property type="match status" value="1"/>
</dbReference>
<dbReference type="HAMAP" id="MF_00565">
    <property type="entry name" value="DltC"/>
    <property type="match status" value="1"/>
</dbReference>
<dbReference type="InterPro" id="IPR036736">
    <property type="entry name" value="ACP-like_sf"/>
</dbReference>
<dbReference type="InterPro" id="IPR003230">
    <property type="entry name" value="DltC"/>
</dbReference>
<dbReference type="InterPro" id="IPR009081">
    <property type="entry name" value="PP-bd_ACP"/>
</dbReference>
<dbReference type="NCBIfam" id="TIGR01688">
    <property type="entry name" value="dltC"/>
    <property type="match status" value="1"/>
</dbReference>
<dbReference type="NCBIfam" id="NF003464">
    <property type="entry name" value="PRK05087.1"/>
    <property type="match status" value="1"/>
</dbReference>
<dbReference type="Pfam" id="PF00550">
    <property type="entry name" value="PP-binding"/>
    <property type="match status" value="1"/>
</dbReference>
<dbReference type="SUPFAM" id="SSF47336">
    <property type="entry name" value="ACP-like"/>
    <property type="match status" value="1"/>
</dbReference>
<dbReference type="PROSITE" id="PS50075">
    <property type="entry name" value="CARRIER"/>
    <property type="match status" value="1"/>
</dbReference>
<keyword id="KW-0961">Cell wall biogenesis/degradation</keyword>
<keyword id="KW-0963">Cytoplasm</keyword>
<keyword id="KW-0596">Phosphopantetheine</keyword>
<keyword id="KW-0597">Phosphoprotein</keyword>
<accession>Q040N1</accession>
<organism>
    <name type="scientific">Lactobacillus gasseri (strain ATCC 33323 / DSM 20243 / BCRC 14619 / CIP 102991 / JCM 1131 / KCTC 3163 / NCIMB 11718 / NCTC 13722 / AM63)</name>
    <dbReference type="NCBI Taxonomy" id="324831"/>
    <lineage>
        <taxon>Bacteria</taxon>
        <taxon>Bacillati</taxon>
        <taxon>Bacillota</taxon>
        <taxon>Bacilli</taxon>
        <taxon>Lactobacillales</taxon>
        <taxon>Lactobacillaceae</taxon>
        <taxon>Lactobacillus</taxon>
    </lineage>
</organism>